<proteinExistence type="inferred from homology"/>
<sequence>MAKKRYRKVTEGIAHIKATFNNTMISVSDPQGNVLCFRSAGGSGFKGSRKGTPYGAQMASEEVGRLARDNFDMRRIAVRVKGPGAGRDSAIRGLRSAGLEVIHLEDRTPLPHNGCRPRKKRRV</sequence>
<keyword id="KW-1185">Reference proteome</keyword>
<keyword id="KW-0687">Ribonucleoprotein</keyword>
<keyword id="KW-0689">Ribosomal protein</keyword>
<keyword id="KW-0694">RNA-binding</keyword>
<keyword id="KW-0699">rRNA-binding</keyword>
<reference key="1">
    <citation type="journal article" date="2003" name="Proc. Natl. Acad. Sci. U.S.A.">
        <title>Complete genome sequence of the Q-fever pathogen, Coxiella burnetii.</title>
        <authorList>
            <person name="Seshadri R."/>
            <person name="Paulsen I.T."/>
            <person name="Eisen J.A."/>
            <person name="Read T.D."/>
            <person name="Nelson K.E."/>
            <person name="Nelson W.C."/>
            <person name="Ward N.L."/>
            <person name="Tettelin H."/>
            <person name="Davidsen T.M."/>
            <person name="Beanan M.J."/>
            <person name="DeBoy R.T."/>
            <person name="Daugherty S.C."/>
            <person name="Brinkac L.M."/>
            <person name="Madupu R."/>
            <person name="Dodson R.J."/>
            <person name="Khouri H.M."/>
            <person name="Lee K.H."/>
            <person name="Carty H.A."/>
            <person name="Scanlan D."/>
            <person name="Heinzen R.A."/>
            <person name="Thompson H.A."/>
            <person name="Samuel J.E."/>
            <person name="Fraser C.M."/>
            <person name="Heidelberg J.F."/>
        </authorList>
    </citation>
    <scope>NUCLEOTIDE SEQUENCE [LARGE SCALE GENOMIC DNA]</scope>
    <source>
        <strain>RSA 493 / Nine Mile phase I</strain>
    </source>
</reference>
<protein>
    <recommendedName>
        <fullName evidence="1">Small ribosomal subunit protein uS11</fullName>
    </recommendedName>
    <alternativeName>
        <fullName evidence="2">30S ribosomal protein S11</fullName>
    </alternativeName>
</protein>
<dbReference type="EMBL" id="AE016828">
    <property type="protein sequence ID" value="AAO89819.1"/>
    <property type="molecule type" value="Genomic_DNA"/>
</dbReference>
<dbReference type="RefSeq" id="NP_819305.1">
    <property type="nucleotide sequence ID" value="NC_002971.4"/>
</dbReference>
<dbReference type="RefSeq" id="WP_010957467.1">
    <property type="nucleotide sequence ID" value="NZ_CCYB01000060.1"/>
</dbReference>
<dbReference type="SMR" id="Q83EQ4"/>
<dbReference type="STRING" id="227377.CBU_0261"/>
<dbReference type="DNASU" id="1208142"/>
<dbReference type="EnsemblBacteria" id="AAO89819">
    <property type="protein sequence ID" value="AAO89819"/>
    <property type="gene ID" value="CBU_0261"/>
</dbReference>
<dbReference type="GeneID" id="1208142"/>
<dbReference type="KEGG" id="cbu:CBU_0261"/>
<dbReference type="PATRIC" id="fig|227377.7.peg.256"/>
<dbReference type="eggNOG" id="COG0100">
    <property type="taxonomic scope" value="Bacteria"/>
</dbReference>
<dbReference type="HOGENOM" id="CLU_072439_5_0_6"/>
<dbReference type="OrthoDB" id="9806415at2"/>
<dbReference type="Proteomes" id="UP000002671">
    <property type="component" value="Chromosome"/>
</dbReference>
<dbReference type="GO" id="GO:0022627">
    <property type="term" value="C:cytosolic small ribosomal subunit"/>
    <property type="evidence" value="ECO:0000318"/>
    <property type="project" value="GO_Central"/>
</dbReference>
<dbReference type="GO" id="GO:0019843">
    <property type="term" value="F:rRNA binding"/>
    <property type="evidence" value="ECO:0007669"/>
    <property type="project" value="UniProtKB-UniRule"/>
</dbReference>
<dbReference type="GO" id="GO:0003735">
    <property type="term" value="F:structural constituent of ribosome"/>
    <property type="evidence" value="ECO:0000318"/>
    <property type="project" value="GO_Central"/>
</dbReference>
<dbReference type="GO" id="GO:0006412">
    <property type="term" value="P:translation"/>
    <property type="evidence" value="ECO:0000318"/>
    <property type="project" value="GO_Central"/>
</dbReference>
<dbReference type="FunFam" id="3.30.420.80:FF:000004">
    <property type="entry name" value="30S ribosomal protein S11"/>
    <property type="match status" value="1"/>
</dbReference>
<dbReference type="Gene3D" id="3.30.420.80">
    <property type="entry name" value="Ribosomal protein S11"/>
    <property type="match status" value="1"/>
</dbReference>
<dbReference type="HAMAP" id="MF_01310">
    <property type="entry name" value="Ribosomal_uS11"/>
    <property type="match status" value="1"/>
</dbReference>
<dbReference type="InterPro" id="IPR001971">
    <property type="entry name" value="Ribosomal_uS11"/>
</dbReference>
<dbReference type="InterPro" id="IPR019981">
    <property type="entry name" value="Ribosomal_uS11_bac-type"/>
</dbReference>
<dbReference type="InterPro" id="IPR018102">
    <property type="entry name" value="Ribosomal_uS11_CS"/>
</dbReference>
<dbReference type="InterPro" id="IPR036967">
    <property type="entry name" value="Ribosomal_uS11_sf"/>
</dbReference>
<dbReference type="NCBIfam" id="NF003698">
    <property type="entry name" value="PRK05309.1"/>
    <property type="match status" value="1"/>
</dbReference>
<dbReference type="NCBIfam" id="TIGR03632">
    <property type="entry name" value="uS11_bact"/>
    <property type="match status" value="1"/>
</dbReference>
<dbReference type="PANTHER" id="PTHR11759">
    <property type="entry name" value="40S RIBOSOMAL PROTEIN S14/30S RIBOSOMAL PROTEIN S11"/>
    <property type="match status" value="1"/>
</dbReference>
<dbReference type="Pfam" id="PF00411">
    <property type="entry name" value="Ribosomal_S11"/>
    <property type="match status" value="1"/>
</dbReference>
<dbReference type="PIRSF" id="PIRSF002131">
    <property type="entry name" value="Ribosomal_S11"/>
    <property type="match status" value="1"/>
</dbReference>
<dbReference type="SUPFAM" id="SSF53137">
    <property type="entry name" value="Translational machinery components"/>
    <property type="match status" value="1"/>
</dbReference>
<dbReference type="PROSITE" id="PS00054">
    <property type="entry name" value="RIBOSOMAL_S11"/>
    <property type="match status" value="1"/>
</dbReference>
<comment type="function">
    <text evidence="1">Located on the platform of the 30S subunit, it bridges several disparate RNA helices of the 16S rRNA. Forms part of the Shine-Dalgarno cleft in the 70S ribosome.</text>
</comment>
<comment type="subunit">
    <text evidence="1">Part of the 30S ribosomal subunit. Interacts with proteins S7 and S18. Binds to IF-3.</text>
</comment>
<comment type="similarity">
    <text evidence="1">Belongs to the universal ribosomal protein uS11 family.</text>
</comment>
<feature type="chain" id="PRO_0000123140" description="Small ribosomal subunit protein uS11">
    <location>
        <begin position="1"/>
        <end position="123"/>
    </location>
</feature>
<evidence type="ECO:0000255" key="1">
    <source>
        <dbReference type="HAMAP-Rule" id="MF_01310"/>
    </source>
</evidence>
<evidence type="ECO:0000305" key="2"/>
<gene>
    <name evidence="1" type="primary">rpsK</name>
    <name type="ordered locus">CBU_0261</name>
</gene>
<accession>Q83EQ4</accession>
<name>RS11_COXBU</name>
<organism>
    <name type="scientific">Coxiella burnetii (strain RSA 493 / Nine Mile phase I)</name>
    <dbReference type="NCBI Taxonomy" id="227377"/>
    <lineage>
        <taxon>Bacteria</taxon>
        <taxon>Pseudomonadati</taxon>
        <taxon>Pseudomonadota</taxon>
        <taxon>Gammaproteobacteria</taxon>
        <taxon>Legionellales</taxon>
        <taxon>Coxiellaceae</taxon>
        <taxon>Coxiella</taxon>
    </lineage>
</organism>